<name>GLUC_RAT</name>
<dbReference type="EMBL" id="K02813">
    <property type="protein sequence ID" value="AAA41235.1"/>
    <property type="molecule type" value="Genomic_DNA"/>
</dbReference>
<dbReference type="EMBL" id="K02809">
    <property type="protein sequence ID" value="AAA41235.1"/>
    <property type="status" value="JOINED"/>
    <property type="molecule type" value="Genomic_DNA"/>
</dbReference>
<dbReference type="EMBL" id="K02810">
    <property type="protein sequence ID" value="AAA41235.1"/>
    <property type="status" value="JOINED"/>
    <property type="molecule type" value="Genomic_DNA"/>
</dbReference>
<dbReference type="EMBL" id="K02811">
    <property type="protein sequence ID" value="AAA41235.1"/>
    <property type="status" value="JOINED"/>
    <property type="molecule type" value="Genomic_DNA"/>
</dbReference>
<dbReference type="EMBL" id="K02812">
    <property type="protein sequence ID" value="AAA41235.1"/>
    <property type="status" value="JOINED"/>
    <property type="molecule type" value="Genomic_DNA"/>
</dbReference>
<dbReference type="PIR" id="A22655">
    <property type="entry name" value="GCRT"/>
</dbReference>
<dbReference type="BMRB" id="P06883"/>
<dbReference type="FunCoup" id="P06883">
    <property type="interactions" value="64"/>
</dbReference>
<dbReference type="STRING" id="10116.ENSRNOP00000007356"/>
<dbReference type="GlyGen" id="P06883">
    <property type="glycosylation" value="1 site"/>
</dbReference>
<dbReference type="iPTMnet" id="P06883"/>
<dbReference type="PhosphoSitePlus" id="P06883"/>
<dbReference type="PaxDb" id="10116-ENSRNOP00000007356"/>
<dbReference type="UCSC" id="RGD:2668">
    <property type="organism name" value="rat"/>
</dbReference>
<dbReference type="AGR" id="RGD:2668"/>
<dbReference type="RGD" id="2668">
    <property type="gene designation" value="Gcg"/>
</dbReference>
<dbReference type="eggNOG" id="ENOG502RYPR">
    <property type="taxonomic scope" value="Eukaryota"/>
</dbReference>
<dbReference type="InParanoid" id="P06883"/>
<dbReference type="PhylomeDB" id="P06883"/>
<dbReference type="Reactome" id="R-RNO-163359">
    <property type="pathway name" value="Glucagon signaling in metabolic regulation"/>
</dbReference>
<dbReference type="Reactome" id="R-RNO-381676">
    <property type="pathway name" value="Glucagon-like Peptide-1 (GLP1) regulates insulin secretion"/>
</dbReference>
<dbReference type="Reactome" id="R-RNO-381771">
    <property type="pathway name" value="Synthesis, secretion, and inactivation of Glucagon-like Peptide-1 (GLP-1)"/>
</dbReference>
<dbReference type="Reactome" id="R-RNO-416476">
    <property type="pathway name" value="G alpha (q) signalling events"/>
</dbReference>
<dbReference type="Reactome" id="R-RNO-420092">
    <property type="pathway name" value="Glucagon-type ligand receptors"/>
</dbReference>
<dbReference type="Reactome" id="R-RNO-422085">
    <property type="pathway name" value="Synthesis, secretion, and deacylation of Ghrelin"/>
</dbReference>
<dbReference type="PRO" id="PR:P06883"/>
<dbReference type="Proteomes" id="UP000002494">
    <property type="component" value="Unplaced"/>
</dbReference>
<dbReference type="GO" id="GO:0005737">
    <property type="term" value="C:cytoplasm"/>
    <property type="evidence" value="ECO:0000266"/>
    <property type="project" value="RGD"/>
</dbReference>
<dbReference type="GO" id="GO:0005576">
    <property type="term" value="C:extracellular region"/>
    <property type="evidence" value="ECO:0000304"/>
    <property type="project" value="Reactome"/>
</dbReference>
<dbReference type="GO" id="GO:0005615">
    <property type="term" value="C:extracellular space"/>
    <property type="evidence" value="ECO:0000314"/>
    <property type="project" value="RGD"/>
</dbReference>
<dbReference type="GO" id="GO:0005886">
    <property type="term" value="C:plasma membrane"/>
    <property type="evidence" value="ECO:0000266"/>
    <property type="project" value="RGD"/>
</dbReference>
<dbReference type="GO" id="GO:0031769">
    <property type="term" value="F:glucagon receptor binding"/>
    <property type="evidence" value="ECO:0000314"/>
    <property type="project" value="RGD"/>
</dbReference>
<dbReference type="GO" id="GO:0005179">
    <property type="term" value="F:hormone activity"/>
    <property type="evidence" value="ECO:0000314"/>
    <property type="project" value="RGD"/>
</dbReference>
<dbReference type="GO" id="GO:0042802">
    <property type="term" value="F:identical protein binding"/>
    <property type="evidence" value="ECO:0000266"/>
    <property type="project" value="RGD"/>
</dbReference>
<dbReference type="GO" id="GO:0048018">
    <property type="term" value="F:receptor ligand activity"/>
    <property type="evidence" value="ECO:0000266"/>
    <property type="project" value="RGD"/>
</dbReference>
<dbReference type="GO" id="GO:0007189">
    <property type="term" value="P:adenylate cyclase-activating G protein-coupled receptor signaling pathway"/>
    <property type="evidence" value="ECO:0000266"/>
    <property type="project" value="RGD"/>
</dbReference>
<dbReference type="GO" id="GO:0007188">
    <property type="term" value="P:adenylate cyclase-modulating G protein-coupled receptor signaling pathway"/>
    <property type="evidence" value="ECO:0000314"/>
    <property type="project" value="RGD"/>
</dbReference>
<dbReference type="GO" id="GO:0071377">
    <property type="term" value="P:cellular response to glucagon stimulus"/>
    <property type="evidence" value="ECO:0000266"/>
    <property type="project" value="RGD"/>
</dbReference>
<dbReference type="GO" id="GO:0006094">
    <property type="term" value="P:gluconeogenesis"/>
    <property type="evidence" value="ECO:0000266"/>
    <property type="project" value="RGD"/>
</dbReference>
<dbReference type="GO" id="GO:0042593">
    <property type="term" value="P:glucose homeostasis"/>
    <property type="evidence" value="ECO:0000250"/>
    <property type="project" value="UniProtKB"/>
</dbReference>
<dbReference type="GO" id="GO:0043066">
    <property type="term" value="P:negative regulation of apoptotic process"/>
    <property type="evidence" value="ECO:0000266"/>
    <property type="project" value="RGD"/>
</dbReference>
<dbReference type="GO" id="GO:0032099">
    <property type="term" value="P:negative regulation of appetite"/>
    <property type="evidence" value="ECO:0000315"/>
    <property type="project" value="RGD"/>
</dbReference>
<dbReference type="GO" id="GO:1900118">
    <property type="term" value="P:negative regulation of execution phase of apoptosis"/>
    <property type="evidence" value="ECO:0000266"/>
    <property type="project" value="RGD"/>
</dbReference>
<dbReference type="GO" id="GO:0090280">
    <property type="term" value="P:positive regulation of calcium ion import"/>
    <property type="evidence" value="ECO:0000266"/>
    <property type="project" value="RGD"/>
</dbReference>
<dbReference type="GO" id="GO:0070374">
    <property type="term" value="P:positive regulation of ERK1 and ERK2 cascade"/>
    <property type="evidence" value="ECO:0000266"/>
    <property type="project" value="RGD"/>
</dbReference>
<dbReference type="GO" id="GO:0045722">
    <property type="term" value="P:positive regulation of gluconeogenesis"/>
    <property type="evidence" value="ECO:0000266"/>
    <property type="project" value="RGD"/>
</dbReference>
<dbReference type="GO" id="GO:0035774">
    <property type="term" value="P:positive regulation of insulin secretion involved in cellular response to glucose stimulus"/>
    <property type="evidence" value="ECO:0000266"/>
    <property type="project" value="RGD"/>
</dbReference>
<dbReference type="GO" id="GO:0010737">
    <property type="term" value="P:protein kinase A signaling"/>
    <property type="evidence" value="ECO:0000266"/>
    <property type="project" value="RGD"/>
</dbReference>
<dbReference type="GO" id="GO:0006109">
    <property type="term" value="P:regulation of carbohydrate metabolic process"/>
    <property type="evidence" value="ECO:0000304"/>
    <property type="project" value="RGD"/>
</dbReference>
<dbReference type="GO" id="GO:0050796">
    <property type="term" value="P:regulation of insulin secretion"/>
    <property type="evidence" value="ECO:0000250"/>
    <property type="project" value="UniProtKB"/>
</dbReference>
<dbReference type="GO" id="GO:0019216">
    <property type="term" value="P:regulation of lipid metabolic process"/>
    <property type="evidence" value="ECO:0000304"/>
    <property type="project" value="RGD"/>
</dbReference>
<dbReference type="GO" id="GO:0014823">
    <property type="term" value="P:response to activity"/>
    <property type="evidence" value="ECO:0000250"/>
    <property type="project" value="UniProtKB"/>
</dbReference>
<dbReference type="GO" id="GO:1903576">
    <property type="term" value="P:response to L-arginine"/>
    <property type="evidence" value="ECO:0000270"/>
    <property type="project" value="RGD"/>
</dbReference>
<dbReference type="Gene3D" id="6.10.250.590">
    <property type="match status" value="3"/>
</dbReference>
<dbReference type="InterPro" id="IPR015550">
    <property type="entry name" value="Glucagon"/>
</dbReference>
<dbReference type="InterPro" id="IPR000532">
    <property type="entry name" value="Glucagon_GIP_secretin_VIP"/>
</dbReference>
<dbReference type="PANTHER" id="PTHR11418">
    <property type="entry name" value="GLUCAGON"/>
    <property type="match status" value="1"/>
</dbReference>
<dbReference type="PANTHER" id="PTHR11418:SF0">
    <property type="entry name" value="PRO-GLUCAGON"/>
    <property type="match status" value="1"/>
</dbReference>
<dbReference type="Pfam" id="PF00123">
    <property type="entry name" value="Hormone_2"/>
    <property type="match status" value="3"/>
</dbReference>
<dbReference type="PRINTS" id="PR00275">
    <property type="entry name" value="GLUCAGON"/>
</dbReference>
<dbReference type="SMART" id="SM00070">
    <property type="entry name" value="GLUCA"/>
    <property type="match status" value="3"/>
</dbReference>
<dbReference type="PROSITE" id="PS00260">
    <property type="entry name" value="GLUCAGON"/>
    <property type="match status" value="4"/>
</dbReference>
<protein>
    <recommendedName>
        <fullName>Pro-glucagon</fullName>
    </recommendedName>
    <component>
        <recommendedName>
            <fullName>Glicentin</fullName>
        </recommendedName>
    </component>
    <component>
        <recommendedName>
            <fullName>Glicentin-related polypeptide</fullName>
            <shortName>GRPP</shortName>
        </recommendedName>
    </component>
    <component>
        <recommendedName>
            <fullName>Oxyntomodulin</fullName>
            <shortName>OXM</shortName>
            <shortName>OXY</shortName>
        </recommendedName>
    </component>
    <component>
        <recommendedName>
            <fullName>Glucagon</fullName>
        </recommendedName>
    </component>
    <component>
        <recommendedName>
            <fullName>Glucagon-like peptide 1</fullName>
            <shortName>GLP-1</shortName>
        </recommendedName>
    </component>
    <component>
        <recommendedName>
            <fullName>Glucagon-like peptide 1(7-37)</fullName>
            <shortName>GLP-1(7-37)</shortName>
        </recommendedName>
    </component>
    <component>
        <recommendedName>
            <fullName>Glucagon-like peptide 1(7-36)</fullName>
            <shortName>GLP-1(7-36)</shortName>
        </recommendedName>
    </component>
    <component>
        <recommendedName>
            <fullName>Glucagon-like peptide 2</fullName>
            <shortName>GLP-2</shortName>
        </recommendedName>
    </component>
</protein>
<proteinExistence type="evidence at protein level"/>
<gene>
    <name type="primary">Gcg</name>
</gene>
<comment type="function">
    <molecule>Glucagon</molecule>
    <text evidence="14 16">Plays a key role in glucose metabolism and homeostasis. Regulates blood glucose by increasing gluconeogenesis and decreasing glycolysis. A counterregulatory hormone of insulin, raises plasma glucose levels in response to insulin-induced hypoglycemia. Plays an important role in initiating and maintaining hyperglycemic conditions in diabetes.</text>
</comment>
<comment type="function">
    <molecule>Glucagon-like peptide 1</molecule>
    <text evidence="3 14 15 17">Potent stimulator of glucose-dependent insulin release (Probable). Also stimulates insulin release in response to IL6 (By similarity). Plays important roles on gastric motility and the suppression of plasma glucagon levels. May be involved in the suppression of satiety and stimulation of glucose disposal in peripheral tissues, independent of the actions of insulin. Has growth-promoting activities on intestinal epithelium. May also regulate the hypothalamic pituitary axis (HPA) via effects on LH, TSH, CRH, oxytocin, and vasopressin secretion. Increases islet mass through stimulation of islet neogenesis and pancreatic beta cell proliferation. Inhibits beta cell apoptosis (Probable).</text>
</comment>
<comment type="function">
    <molecule>Glucagon-like peptide 2</molecule>
    <text evidence="13 14 15 17">Stimulates intestinal growth and up-regulates villus height in the small intestine, concomitant with increased crypt cell proliferation and decreased enterocyte apoptosis. The gastrointestinal tract, from the stomach to the colon is the principal target for GLP-2 action. Plays a key role in nutrient homeostasis, enhancing nutrient assimilation through enhanced gastrointestinal function, as well as increasing nutrient disposal. Stimulates intestinal glucose transport and decreases mucosal permeability.</text>
</comment>
<comment type="function">
    <molecule>Glicentin</molecule>
    <text evidence="14 15">May modulate gastric acid secretion and the gastro-pyloro-duodenal activity. May play an important role in intestinal mucosal growth in the early period of life.</text>
</comment>
<comment type="function">
    <text evidence="8">Oxyntomodulin significantly reduces food intake.</text>
</comment>
<comment type="subcellular location">
    <subcellularLocation>
        <location evidence="3">Secreted</location>
    </subcellularLocation>
</comment>
<comment type="subcellular location">
    <molecule>Glucagon-like peptide 1</molecule>
    <subcellularLocation>
        <location evidence="3">Secreted</location>
    </subcellularLocation>
</comment>
<comment type="tissue specificity">
    <text evidence="9">Glucagon is secreted in the A cells of the islets of Langerhans. GLP-1, GLP-2, oxyntomodulin and glicentin are secreted from enteroendocrine cells throughout the gastrointestinal tract.</text>
</comment>
<comment type="induction">
    <text>Glucagon release is stimulated by hypoglycemia and inhibited by hyperglycemia, insulin, and somatostatin. GLP-1 and GLP-2 are induced in response to nutrient ingestion.</text>
</comment>
<comment type="PTM">
    <text evidence="11">Proglucagon is post-translationally processed in a tissue-specific manner in pancreatic A cells and intestinal L cells. In pancreatic A cells, the major bioactive hormone is glucagon cleaved by PCSK2/PC2. In the intestinal L cells PCSK1/PC1 liberates GLP-1, GLP-2, glicentin and oxyntomodulin. GLP-1 is further N-terminally truncated by post-translational processing in the intestinal L cells resulting in GLP-1(7-37) GLP-1-(7-36)amide. The C-terminal amidation is neither important for the metabolism of GLP-1 nor for its effects on the endocrine pancreas.</text>
</comment>
<comment type="similarity">
    <text evidence="12">Belongs to the glucagon family.</text>
</comment>
<organism>
    <name type="scientific">Rattus norvegicus</name>
    <name type="common">Rat</name>
    <dbReference type="NCBI Taxonomy" id="10116"/>
    <lineage>
        <taxon>Eukaryota</taxon>
        <taxon>Metazoa</taxon>
        <taxon>Chordata</taxon>
        <taxon>Craniata</taxon>
        <taxon>Vertebrata</taxon>
        <taxon>Euteleostomi</taxon>
        <taxon>Mammalia</taxon>
        <taxon>Eutheria</taxon>
        <taxon>Euarchontoglires</taxon>
        <taxon>Glires</taxon>
        <taxon>Rodentia</taxon>
        <taxon>Myomorpha</taxon>
        <taxon>Muroidea</taxon>
        <taxon>Muridae</taxon>
        <taxon>Murinae</taxon>
        <taxon>Rattus</taxon>
    </lineage>
</organism>
<reference key="1">
    <citation type="journal article" date="1984" name="J. Biol. Chem.">
        <title>Glucagon gene sequence. Four of six exons encode separate functional domains of rat pre-proglucagon.</title>
        <authorList>
            <person name="Heinrich G."/>
            <person name="Gros P."/>
            <person name="Habener J.F."/>
        </authorList>
    </citation>
    <scope>NUCLEOTIDE SEQUENCE [GENOMIC DNA]</scope>
</reference>
<reference key="2">
    <citation type="journal article" date="1984" name="Endocrinology">
        <title>Pre-proglucagon messenger ribonucleic acid: nucleotide and encoded amino acid sequences of the rat pancreatic complementary deoxyribonucleic acid.</title>
        <authorList>
            <person name="Heinrich G."/>
            <person name="Gros P."/>
            <person name="Lund P.K."/>
            <person name="Bentley R.C."/>
            <person name="Habener J.F."/>
        </authorList>
    </citation>
    <scope>NUCLEOTIDE SEQUENCE [GENOMIC DNA]</scope>
</reference>
<reference key="3">
    <citation type="journal article" date="1986" name="J. Biol. Chem.">
        <title>Preproglucagon gene expression in pancreas and intestine diversifies at the level of post-translational processing.</title>
        <authorList>
            <person name="Mojsov S."/>
            <person name="Heinrich G."/>
            <person name="Wilson I.B."/>
            <person name="Ravazzola M."/>
            <person name="Orci L."/>
            <person name="Habener J.F."/>
        </authorList>
    </citation>
    <scope>NUCLEOTIDE SEQUENCE [GENOMIC DNA]</scope>
</reference>
<reference key="4">
    <citation type="journal article" date="1994" name="Proc. Natl. Acad. Sci. U.S.A.">
        <title>Purification and sequence of rat oxyntomodulin.</title>
        <authorList>
            <person name="Collie N.L."/>
            <person name="Walsh J.H."/>
            <person name="Wong H.C."/>
            <person name="Shively J.E."/>
            <person name="Davis M.T."/>
            <person name="Lee T.D."/>
            <person name="Reeve J.R. Jr."/>
        </authorList>
    </citation>
    <scope>PROTEIN SEQUENCE OF 53-89</scope>
</reference>
<reference key="5">
    <citation type="journal article" date="2001" name="Endocrinology">
        <title>Oxyntomodulin inhibits food intake in the rat.</title>
        <authorList>
            <person name="Dakin C.L."/>
            <person name="Gunn I."/>
            <person name="Small C.J."/>
            <person name="Edwards C.M."/>
            <person name="Hay D.L."/>
            <person name="Smith D.M."/>
            <person name="Ghatei M.A."/>
            <person name="Bloom S.R."/>
        </authorList>
    </citation>
    <scope>FUNCTION OF OXYNTOMODULIN</scope>
</reference>
<reference key="6">
    <citation type="journal article" date="1996" name="Mol. Endocrinol.">
        <title>Role of prohormone convertases in the tissue-specific processing of proglucagon.</title>
        <authorList>
            <person name="Dhanvantari S."/>
            <person name="Seidah N.G."/>
            <person name="Brubaker P.L."/>
        </authorList>
    </citation>
    <scope>PROTEOLYTIC PROCESSING BY PCSK1 AND PCSK2</scope>
</reference>
<reference key="7">
    <citation type="journal article" date="1990" name="J. Biol. Chem.">
        <title>Both amidated and nonamidated forms of glucagon-like peptide I are synthesized in the rat intestine and the pancreas.</title>
        <authorList>
            <person name="Mojsov S."/>
            <person name="Kopczynski M.G."/>
            <person name="Habener J.F."/>
        </authorList>
    </citation>
    <scope>TISSUE SPECIFICITY</scope>
</reference>
<reference key="8">
    <citation type="journal article" date="1999" name="Endocr. Rev.">
        <title>The glucagon-like peptides.</title>
        <authorList>
            <person name="Kieffer T.J."/>
            <person name="Habener J.F."/>
        </authorList>
    </citation>
    <scope>REVIEW</scope>
</reference>
<reference key="9">
    <citation type="journal article" date="1999" name="Trends Endocrinol. Metab.">
        <title>Glucagon-like peptide 2.</title>
        <authorList>
            <person name="Drucker D.J."/>
        </authorList>
    </citation>
    <scope>REVIEW</scope>
</reference>
<reference key="10">
    <citation type="journal article" date="2003" name="Am. J. Physiol.">
        <title>Glucagon and regulation of glucose metabolism.</title>
        <authorList>
            <person name="Jiang G."/>
            <person name="Zhang B.B."/>
        </authorList>
    </citation>
    <scope>REVIEW</scope>
</reference>
<reference key="11">
    <citation type="journal article" date="2003" name="Can. J. Physiol. Pharmacol.">
        <title>Direct and indirect mechanisms regulating secretion of glucagon-like peptide-1 and glucagon-like peptide-2.</title>
        <authorList>
            <person name="Brubaker P.L."/>
            <person name="Anini Y."/>
        </authorList>
    </citation>
    <scope>REVIEW</scope>
</reference>
<reference key="12">
    <citation type="journal article" date="2003" name="Mol. Endocrinol.">
        <title>Glucagon-like peptides: regulators of cell proliferation, differentiation, and apoptosis.</title>
        <authorList>
            <person name="Drucker D.J."/>
        </authorList>
    </citation>
    <scope>REVIEW</scope>
</reference>
<reference key="13">
    <citation type="journal article" date="2012" name="Nat. Commun.">
        <title>Quantitative maps of protein phosphorylation sites across 14 different rat organs and tissues.</title>
        <authorList>
            <person name="Lundby A."/>
            <person name="Secher A."/>
            <person name="Lage K."/>
            <person name="Nordsborg N.B."/>
            <person name="Dmytriyev A."/>
            <person name="Lundby C."/>
            <person name="Olsen J.V."/>
        </authorList>
    </citation>
    <scope>PHOSPHORYLATION [LARGE SCALE ANALYSIS] AT SER-152</scope>
    <scope>IDENTIFICATION BY MASS SPECTROMETRY [LARGE SCALE ANALYSIS]</scope>
</reference>
<keyword id="KW-0027">Amidation</keyword>
<keyword id="KW-0165">Cleavage on pair of basic residues</keyword>
<keyword id="KW-0903">Direct protein sequencing</keyword>
<keyword id="KW-0372">Hormone</keyword>
<keyword id="KW-0597">Phosphoprotein</keyword>
<keyword id="KW-1185">Reference proteome</keyword>
<keyword id="KW-0964">Secreted</keyword>
<keyword id="KW-0732">Signal</keyword>
<evidence type="ECO:0000250" key="1"/>
<evidence type="ECO:0000250" key="2">
    <source>
        <dbReference type="UniProtKB" id="P01274"/>
    </source>
</evidence>
<evidence type="ECO:0000250" key="3">
    <source>
        <dbReference type="UniProtKB" id="P01275"/>
    </source>
</evidence>
<evidence type="ECO:0000250" key="4">
    <source>
        <dbReference type="UniProtKB" id="P09686"/>
    </source>
</evidence>
<evidence type="ECO:0000250" key="5">
    <source>
        <dbReference type="UniProtKB" id="P15438"/>
    </source>
</evidence>
<evidence type="ECO:0000250" key="6">
    <source>
        <dbReference type="UniProtKB" id="P55095"/>
    </source>
</evidence>
<evidence type="ECO:0000256" key="7">
    <source>
        <dbReference type="SAM" id="MobiDB-lite"/>
    </source>
</evidence>
<evidence type="ECO:0000269" key="8">
    <source>
    </source>
</evidence>
<evidence type="ECO:0000269" key="9">
    <source>
    </source>
</evidence>
<evidence type="ECO:0000269" key="10">
    <source>
    </source>
</evidence>
<evidence type="ECO:0000269" key="11">
    <source>
    </source>
</evidence>
<evidence type="ECO:0000305" key="12"/>
<evidence type="ECO:0000305" key="13">
    <source>
    </source>
</evidence>
<evidence type="ECO:0000305" key="14">
    <source>
    </source>
</evidence>
<evidence type="ECO:0000305" key="15">
    <source>
    </source>
</evidence>
<evidence type="ECO:0000305" key="16">
    <source>
    </source>
</evidence>
<evidence type="ECO:0000305" key="17">
    <source>
    </source>
</evidence>
<evidence type="ECO:0007744" key="18">
    <source>
    </source>
</evidence>
<feature type="signal peptide">
    <location>
        <begin position="1"/>
        <end position="20"/>
    </location>
</feature>
<feature type="peptide" id="PRO_0000011303" description="Glicentin" evidence="2">
    <location>
        <begin position="21"/>
        <end position="89"/>
    </location>
</feature>
<feature type="peptide" id="PRO_0000011304" description="Glicentin-related polypeptide" evidence="4">
    <location>
        <begin position="21"/>
        <end position="50"/>
    </location>
</feature>
<feature type="peptide" id="PRO_0000011305" description="Oxyntomodulin" evidence="10">
    <location>
        <begin position="53"/>
        <end position="89"/>
    </location>
</feature>
<feature type="peptide" id="PRO_0000011306" description="Glucagon" evidence="3">
    <location>
        <begin position="53"/>
        <end position="81"/>
    </location>
</feature>
<feature type="propeptide" id="PRO_0000011307" evidence="3">
    <location>
        <begin position="84"/>
        <end position="89"/>
    </location>
</feature>
<feature type="peptide" id="PRO_0000011308" description="Glucagon-like peptide 1" evidence="3">
    <location>
        <begin position="92"/>
        <end position="128"/>
    </location>
</feature>
<feature type="peptide" id="PRO_0000011309" description="Glucagon-like peptide 1(7-37)" evidence="3">
    <location>
        <begin position="98"/>
        <end position="128"/>
    </location>
</feature>
<feature type="peptide" id="PRO_0000011310" description="Glucagon-like peptide 1(7-36)" evidence="3">
    <location>
        <begin position="98"/>
        <end position="127"/>
    </location>
</feature>
<feature type="propeptide" id="PRO_0000011311" evidence="5">
    <location>
        <begin position="131"/>
        <end position="145"/>
    </location>
</feature>
<feature type="peptide" id="PRO_0000011312" description="Glucagon-like peptide 2" evidence="5">
    <location>
        <begin position="146"/>
        <end position="178"/>
    </location>
</feature>
<feature type="region of interest" description="Disordered" evidence="7">
    <location>
        <begin position="23"/>
        <end position="59"/>
    </location>
</feature>
<feature type="site" description="Cleavage; by PCSK2" evidence="1">
    <location>
        <begin position="52"/>
        <end position="53"/>
    </location>
</feature>
<feature type="site" description="Cleavage; by PCSK1 and PCSK2" evidence="1">
    <location>
        <begin position="83"/>
        <end position="84"/>
    </location>
</feature>
<feature type="site" description="Cleavage; by PCSK1" evidence="1">
    <location>
        <begin position="91"/>
        <end position="92"/>
    </location>
</feature>
<feature type="site" description="Cleavage; by PCSK1" evidence="1">
    <location>
        <begin position="97"/>
        <end position="98"/>
    </location>
</feature>
<feature type="site" description="Cleavage; by PCSK1" evidence="1">
    <location>
        <begin position="130"/>
        <end position="131"/>
    </location>
</feature>
<feature type="site" description="Cleavage; by PCSK1" evidence="1">
    <location>
        <begin position="145"/>
        <end position="146"/>
    </location>
</feature>
<feature type="modified residue" description="Phosphoserine" evidence="6">
    <location>
        <position position="54"/>
    </location>
</feature>
<feature type="modified residue" description="Phosphoserine" evidence="6">
    <location>
        <position position="105"/>
    </location>
</feature>
<feature type="modified residue" description="Phosphoserine" evidence="6">
    <location>
        <position position="108"/>
    </location>
</feature>
<feature type="modified residue" description="Arginine amide" evidence="1">
    <location>
        <position position="127"/>
    </location>
</feature>
<feature type="modified residue" description="Phosphoserine" evidence="6">
    <location>
        <position position="150"/>
    </location>
</feature>
<feature type="modified residue" description="Phosphoserine" evidence="18">
    <location>
        <position position="152"/>
    </location>
</feature>
<accession>P06883</accession>
<sequence>MKTVYIVAGLFVMLVQGSWQHAPQDTEENARSFPASQTEPLEDPDQINEDKRHSQGTFTSDYSKYLDSRRAQDFVQWLMNTKRNRNNIAKRHDEFERHAEGTFTSDVSSYLEGQAAKEFIAWLVKGRGRRDFPEEVAIAEELGRRHADGSFSDEMNTILDNLATRDFINWLIQTKITDKK</sequence>